<reference key="1">
    <citation type="submission" date="2001-08" db="EMBL/GenBank/DDBJ databases">
        <title>SNAG1, a novel SH3 and PX domain containing protein.</title>
        <authorList>
            <person name="Cohn J.B."/>
            <person name="Bernstein A."/>
            <person name="Stanford W.L."/>
        </authorList>
    </citation>
    <scope>NUCLEOTIDE SEQUENCE [MRNA]</scope>
    <source>
        <strain>C57BL/6J</strain>
    </source>
</reference>
<reference key="2">
    <citation type="journal article" date="2010" name="Cell">
        <title>A tissue-specific atlas of mouse protein phosphorylation and expression.</title>
        <authorList>
            <person name="Huttlin E.L."/>
            <person name="Jedrychowski M.P."/>
            <person name="Elias J.E."/>
            <person name="Goswami T."/>
            <person name="Rad R."/>
            <person name="Beausoleil S.A."/>
            <person name="Villen J."/>
            <person name="Haas W."/>
            <person name="Sowa M.E."/>
            <person name="Gygi S.P."/>
        </authorList>
    </citation>
    <scope>IDENTIFICATION BY MASS SPECTROMETRY [LARGE SCALE ANALYSIS]</scope>
    <source>
        <tissue>Kidney</tissue>
        <tissue>Pancreas</tissue>
        <tissue>Testis</tissue>
    </source>
</reference>
<reference key="3">
    <citation type="journal article" date="2016" name="J. Cell Sci.">
        <title>BAR-SH3 sorting nexins are conserved interacting proteins of Nervous wreck that organize synapses and promote neurotransmission.</title>
        <authorList>
            <person name="Ukken F.P."/>
            <person name="Bruckner J.J."/>
            <person name="Weir K.L."/>
            <person name="Hope S.J."/>
            <person name="Sison S.L."/>
            <person name="Birschbach R.M."/>
            <person name="Hicks L."/>
            <person name="Taylor K.L."/>
            <person name="Dent E.W."/>
            <person name="Gonsalvez G.B."/>
            <person name="O'Connor-Giles K.M."/>
        </authorList>
    </citation>
    <scope>INTERACTION WITH FCHSD1</scope>
</reference>
<name>SNX18_MOUSE</name>
<gene>
    <name evidence="7 10" type="primary">Snx18</name>
    <name evidence="8" type="synonym">Snag1</name>
</gene>
<feature type="chain" id="PRO_0000213867" description="Sorting nexin-18">
    <location>
        <begin position="1"/>
        <end position="614"/>
    </location>
</feature>
<feature type="domain" description="SH3" evidence="4">
    <location>
        <begin position="1"/>
        <end position="61"/>
    </location>
</feature>
<feature type="domain" description="PX" evidence="3">
    <location>
        <begin position="266"/>
        <end position="376"/>
    </location>
</feature>
<feature type="domain" description="BAR">
    <location>
        <begin position="411"/>
        <end position="614"/>
    </location>
</feature>
<feature type="region of interest" description="Disordered" evidence="5">
    <location>
        <begin position="85"/>
        <end position="218"/>
    </location>
</feature>
<feature type="compositionally biased region" description="Pro residues" evidence="5">
    <location>
        <begin position="90"/>
        <end position="101"/>
    </location>
</feature>
<feature type="compositionally biased region" description="Acidic residues" evidence="5">
    <location>
        <begin position="141"/>
        <end position="151"/>
    </location>
</feature>
<feature type="binding site" evidence="2">
    <location>
        <position position="302"/>
    </location>
    <ligand>
        <name>a 1,2-diacyl-sn-glycero-3-phospho-(1D-myo-inositol-4,5-bisphosphate)</name>
        <dbReference type="ChEBI" id="CHEBI:58456"/>
    </ligand>
</feature>
<feature type="binding site" evidence="2">
    <location>
        <position position="304"/>
    </location>
    <ligand>
        <name>a 1,2-diacyl-sn-glycero-3-phospho-(1D-myo-inositol-4,5-bisphosphate)</name>
        <dbReference type="ChEBI" id="CHEBI:58456"/>
    </ligand>
</feature>
<feature type="binding site" evidence="2">
    <location>
        <position position="342"/>
    </location>
    <ligand>
        <name>a 1,2-diacyl-sn-glycero-3-phospho-(1D-myo-inositol-4,5-bisphosphate)</name>
        <dbReference type="ChEBI" id="CHEBI:58456"/>
    </ligand>
</feature>
<comment type="function">
    <text evidence="1">Involved in endocytosis and intracellular vesicle trafficking, both during interphase and at the end of mitosis. Required for efficient progress through mitosis and cytokinesis. Required for normal formation of the cleavage furrow at the end of mitosis. Plays a role in endocytosis via clathrin-coated pits, but also clathrin-independent, actin-dependent fluid-phase endocytosis. Plays a role in macropinocytosis. Binds to membranes enriched in phosphatidylinositol 4,5-bisphosphate and promotes membrane tubulation. Stimulates the GTPase activity of DNM2. Promotes DNM2 location at the plasma membrane. Together with DNM2, involved in autophagosome assembly by regulating trafficking from recycling endosomes of phospholipid scramblase ATG9A.</text>
</comment>
<comment type="subunit">
    <text evidence="1 6">Heterodimer with SNX9. Interacts with ITCH. Interacts with dynamin-2 (DNM2), SYNJ1 and WASL. Interacts with the AP-1 complex (By similarity). Interacts with FCHSD1 (via the F-BAR domain) (PubMed:26567222).</text>
</comment>
<comment type="interaction">
    <interactant intactId="EBI-6879954">
        <id>Q91ZR2</id>
    </interactant>
    <interactant intactId="EBI-495538">
        <id>P48023</id>
        <label>FASLG</label>
    </interactant>
    <organismsDiffer>true</organismsDiffer>
    <experiments>4</experiments>
</comment>
<comment type="subcellular location">
    <subcellularLocation>
        <location evidence="1">Endomembrane system</location>
        <topology evidence="1">Peripheral membrane protein</topology>
        <orientation evidence="1">Cytoplasmic side</orientation>
    </subcellularLocation>
    <subcellularLocation>
        <location evidence="1">Endosome membrane</location>
        <topology evidence="1">Peripheral membrane protein</topology>
        <orientation evidence="1">Cytoplasmic side</orientation>
    </subcellularLocation>
    <subcellularLocation>
        <location evidence="1">Recycling endosome membrane</location>
        <topology evidence="1">Peripheral membrane protein</topology>
        <orientation evidence="1">Cytoplasmic side</orientation>
    </subcellularLocation>
    <subcellularLocation>
        <location evidence="1">Cell membrane</location>
        <topology evidence="1">Peripheral membrane protein</topology>
        <orientation evidence="1">Cytoplasmic side</orientation>
    </subcellularLocation>
    <subcellularLocation>
        <location evidence="1">Cytoplasmic vesicle membrane</location>
        <topology evidence="1">Peripheral membrane protein</topology>
        <orientation evidence="1">Cytoplasmic side</orientation>
    </subcellularLocation>
    <text evidence="1">Localized at sites of endocytosis at the cell membrane. Detected on newly formed macropinosomes. Partially colocalized with clathrin and dynamin at the cell membrane. Transiently recruited to clathrin-coated pits at a late stage of clathrin-coated vesicle formation.</text>
</comment>
<comment type="domain">
    <text evidence="1">The PX domain mediates interaction with membranes enriched in phosphatidylinositol 4,5-bisphosphate.</text>
</comment>
<comment type="similarity">
    <text evidence="9">Belongs to the sorting nexin family.</text>
</comment>
<proteinExistence type="evidence at protein level"/>
<accession>Q91ZR2</accession>
<sequence length="614" mass="67904">MALRARALYDFKSENPGEISLREHEVLSLCSEQDIEGWLEGINSRGDRGLFPASYVQVIRAPEPGPPADGGPGAPARYANVPPGGFEPLPAAPPAAFPPLLQPQASPGSFQPPGAGFPYGGGALQPSPQQLYGGYQASLGSDDDWDDEWDDSSTVADEPGALGSGAYPDLDGSSSAGGGAAGRYRLSTRSDLSLGSRGVSAPPAPSVWSQELGHGEPQPQSLLHLRQVGRGGLRAGRGVRLREGWGQAVRGAGSYGPEWQENPYPFQCTIDDPTKQTKFKGMKSYISYKLVPTHTQVPVHRRYKHFDWLYARLAEKFPVISVPHLPEKQATGRFEEDFISKRRKGLIWWMNHMASHPVLAQCDVFQHFLTCPSSTDEKAWKQGKRKAEKDEMVGANFFLTLSTPPAAALDLQEVESKIDGFKCFTKKMDDSALQLNHTANEFARKQVTGFKKEYQKVGQSFRGLSQAFELDQQAFSVGLNQAIAFTGDAYDAIGELFAEQPRQDLDPVMDLLALYQGHLANFPDIIHVQKGALTKVKESRRHVEEGKMEVQKADGIQDRCNTISFATLAEIHHFHQIRVRDFKSQMQHFLQQQIIFFQKVTQKLEEALHKYDSV</sequence>
<protein>
    <recommendedName>
        <fullName evidence="7">Sorting nexin-18</fullName>
    </recommendedName>
    <alternativeName>
        <fullName evidence="8">Sorting nexin-associated Golgi protein 1</fullName>
    </alternativeName>
</protein>
<keyword id="KW-0131">Cell cycle</keyword>
<keyword id="KW-0132">Cell division</keyword>
<keyword id="KW-1003">Cell membrane</keyword>
<keyword id="KW-0968">Cytoplasmic vesicle</keyword>
<keyword id="KW-0254">Endocytosis</keyword>
<keyword id="KW-0967">Endosome</keyword>
<keyword id="KW-0446">Lipid-binding</keyword>
<keyword id="KW-0472">Membrane</keyword>
<keyword id="KW-0498">Mitosis</keyword>
<keyword id="KW-0653">Protein transport</keyword>
<keyword id="KW-1185">Reference proteome</keyword>
<keyword id="KW-0728">SH3 domain</keyword>
<keyword id="KW-0813">Transport</keyword>
<dbReference type="EMBL" id="AF408408">
    <property type="protein sequence ID" value="AAL02105.1"/>
    <property type="molecule type" value="mRNA"/>
</dbReference>
<dbReference type="SMR" id="Q91ZR2"/>
<dbReference type="FunCoup" id="Q91ZR2">
    <property type="interactions" value="1812"/>
</dbReference>
<dbReference type="IntAct" id="Q91ZR2">
    <property type="interactions" value="2"/>
</dbReference>
<dbReference type="MINT" id="Q91ZR2"/>
<dbReference type="STRING" id="10090.ENSMUSP00000104864"/>
<dbReference type="GlyGen" id="Q91ZR2">
    <property type="glycosylation" value="1 site, 1 O-linked glycan (1 site)"/>
</dbReference>
<dbReference type="iPTMnet" id="Q91ZR2"/>
<dbReference type="PhosphoSitePlus" id="Q91ZR2"/>
<dbReference type="jPOST" id="Q91ZR2"/>
<dbReference type="PaxDb" id="10090-ENSMUSP00000104864"/>
<dbReference type="PeptideAtlas" id="Q91ZR2"/>
<dbReference type="ProteomicsDB" id="261467"/>
<dbReference type="Pumba" id="Q91ZR2"/>
<dbReference type="AGR" id="MGI:2137642"/>
<dbReference type="MGI" id="MGI:2137642">
    <property type="gene designation" value="Snx18"/>
</dbReference>
<dbReference type="eggNOG" id="KOG2528">
    <property type="taxonomic scope" value="Eukaryota"/>
</dbReference>
<dbReference type="InParanoid" id="Q91ZR2"/>
<dbReference type="PhylomeDB" id="Q91ZR2"/>
<dbReference type="Reactome" id="R-MMU-8856828">
    <property type="pathway name" value="Clathrin-mediated endocytosis"/>
</dbReference>
<dbReference type="ChiTaRS" id="Snx18">
    <property type="organism name" value="mouse"/>
</dbReference>
<dbReference type="PRO" id="PR:Q91ZR2"/>
<dbReference type="Proteomes" id="UP000000589">
    <property type="component" value="Unplaced"/>
</dbReference>
<dbReference type="RNAct" id="Q91ZR2">
    <property type="molecule type" value="protein"/>
</dbReference>
<dbReference type="GO" id="GO:0009898">
    <property type="term" value="C:cytoplasmic side of plasma membrane"/>
    <property type="evidence" value="ECO:0000250"/>
    <property type="project" value="UniProtKB"/>
</dbReference>
<dbReference type="GO" id="GO:0030426">
    <property type="term" value="C:growth cone"/>
    <property type="evidence" value="ECO:0000314"/>
    <property type="project" value="MGI"/>
</dbReference>
<dbReference type="GO" id="GO:0043025">
    <property type="term" value="C:neuronal cell body"/>
    <property type="evidence" value="ECO:0000314"/>
    <property type="project" value="MGI"/>
</dbReference>
<dbReference type="GO" id="GO:0055038">
    <property type="term" value="C:recycling endosome membrane"/>
    <property type="evidence" value="ECO:0000250"/>
    <property type="project" value="UniProtKB"/>
</dbReference>
<dbReference type="GO" id="GO:0035091">
    <property type="term" value="F:phosphatidylinositol binding"/>
    <property type="evidence" value="ECO:0000314"/>
    <property type="project" value="MGI"/>
</dbReference>
<dbReference type="GO" id="GO:0051301">
    <property type="term" value="P:cell division"/>
    <property type="evidence" value="ECO:0007669"/>
    <property type="project" value="UniProtKB-KW"/>
</dbReference>
<dbReference type="GO" id="GO:0006897">
    <property type="term" value="P:endocytosis"/>
    <property type="evidence" value="ECO:0000250"/>
    <property type="project" value="UniProtKB"/>
</dbReference>
<dbReference type="GO" id="GO:0000278">
    <property type="term" value="P:mitotic cell cycle"/>
    <property type="evidence" value="ECO:0007669"/>
    <property type="project" value="InterPro"/>
</dbReference>
<dbReference type="GO" id="GO:2000786">
    <property type="term" value="P:positive regulation of autophagosome assembly"/>
    <property type="evidence" value="ECO:0000250"/>
    <property type="project" value="UniProtKB"/>
</dbReference>
<dbReference type="GO" id="GO:0043547">
    <property type="term" value="P:positive regulation of GTPase activity"/>
    <property type="evidence" value="ECO:0000250"/>
    <property type="project" value="UniProtKB"/>
</dbReference>
<dbReference type="GO" id="GO:0015031">
    <property type="term" value="P:protein transport"/>
    <property type="evidence" value="ECO:0000250"/>
    <property type="project" value="UniProtKB"/>
</dbReference>
<dbReference type="CDD" id="cd07670">
    <property type="entry name" value="BAR_SNX18"/>
    <property type="match status" value="1"/>
</dbReference>
<dbReference type="CDD" id="cd07286">
    <property type="entry name" value="PX_SNX18"/>
    <property type="match status" value="1"/>
</dbReference>
<dbReference type="CDD" id="cd11897">
    <property type="entry name" value="SH3_SNX18"/>
    <property type="match status" value="1"/>
</dbReference>
<dbReference type="FunFam" id="1.20.1270.60:FF:000033">
    <property type="entry name" value="Sorting nexin"/>
    <property type="match status" value="1"/>
</dbReference>
<dbReference type="FunFam" id="2.30.30.40:FF:000116">
    <property type="entry name" value="Sorting nexin"/>
    <property type="match status" value="1"/>
</dbReference>
<dbReference type="FunFam" id="3.30.1520.10:FF:000004">
    <property type="entry name" value="Sorting nexin"/>
    <property type="match status" value="1"/>
</dbReference>
<dbReference type="Gene3D" id="1.20.1270.60">
    <property type="entry name" value="Arfaptin homology (AH) domain/BAR domain"/>
    <property type="match status" value="1"/>
</dbReference>
<dbReference type="Gene3D" id="3.30.1520.10">
    <property type="entry name" value="Phox-like domain"/>
    <property type="match status" value="1"/>
</dbReference>
<dbReference type="Gene3D" id="2.30.30.40">
    <property type="entry name" value="SH3 Domains"/>
    <property type="match status" value="1"/>
</dbReference>
<dbReference type="InterPro" id="IPR027267">
    <property type="entry name" value="AH/BAR_dom_sf"/>
</dbReference>
<dbReference type="InterPro" id="IPR001683">
    <property type="entry name" value="PX_dom"/>
</dbReference>
<dbReference type="InterPro" id="IPR036871">
    <property type="entry name" value="PX_dom_sf"/>
</dbReference>
<dbReference type="InterPro" id="IPR036028">
    <property type="entry name" value="SH3-like_dom_sf"/>
</dbReference>
<dbReference type="InterPro" id="IPR001452">
    <property type="entry name" value="SH3_domain"/>
</dbReference>
<dbReference type="InterPro" id="IPR035703">
    <property type="entry name" value="SNX18_PX"/>
</dbReference>
<dbReference type="InterPro" id="IPR035557">
    <property type="entry name" value="SNX18_SH3"/>
</dbReference>
<dbReference type="InterPro" id="IPR014536">
    <property type="entry name" value="Snx9_fam"/>
</dbReference>
<dbReference type="InterPro" id="IPR019497">
    <property type="entry name" value="Sorting_nexin_WASP-bd-dom"/>
</dbReference>
<dbReference type="PANTHER" id="PTHR45827">
    <property type="entry name" value="SORTING NEXIN"/>
    <property type="match status" value="1"/>
</dbReference>
<dbReference type="PANTHER" id="PTHR45827:SF4">
    <property type="entry name" value="SORTING NEXIN-18"/>
    <property type="match status" value="1"/>
</dbReference>
<dbReference type="Pfam" id="PF10456">
    <property type="entry name" value="BAR_3_WASP_bdg"/>
    <property type="match status" value="1"/>
</dbReference>
<dbReference type="Pfam" id="PF00787">
    <property type="entry name" value="PX"/>
    <property type="match status" value="1"/>
</dbReference>
<dbReference type="Pfam" id="PF14604">
    <property type="entry name" value="SH3_9"/>
    <property type="match status" value="1"/>
</dbReference>
<dbReference type="PIRSF" id="PIRSF027744">
    <property type="entry name" value="Snx9"/>
    <property type="match status" value="1"/>
</dbReference>
<dbReference type="SMART" id="SM00312">
    <property type="entry name" value="PX"/>
    <property type="match status" value="1"/>
</dbReference>
<dbReference type="SMART" id="SM00326">
    <property type="entry name" value="SH3"/>
    <property type="match status" value="1"/>
</dbReference>
<dbReference type="SUPFAM" id="SSF64268">
    <property type="entry name" value="PX domain"/>
    <property type="match status" value="1"/>
</dbReference>
<dbReference type="SUPFAM" id="SSF50044">
    <property type="entry name" value="SH3-domain"/>
    <property type="match status" value="1"/>
</dbReference>
<dbReference type="PROSITE" id="PS50195">
    <property type="entry name" value="PX"/>
    <property type="match status" value="1"/>
</dbReference>
<dbReference type="PROSITE" id="PS50002">
    <property type="entry name" value="SH3"/>
    <property type="match status" value="1"/>
</dbReference>
<evidence type="ECO:0000250" key="1">
    <source>
        <dbReference type="UniProtKB" id="Q96RF0"/>
    </source>
</evidence>
<evidence type="ECO:0000250" key="2">
    <source>
        <dbReference type="UniProtKB" id="Q9Y5X1"/>
    </source>
</evidence>
<evidence type="ECO:0000255" key="3">
    <source>
        <dbReference type="PROSITE-ProRule" id="PRU00147"/>
    </source>
</evidence>
<evidence type="ECO:0000255" key="4">
    <source>
        <dbReference type="PROSITE-ProRule" id="PRU00192"/>
    </source>
</evidence>
<evidence type="ECO:0000256" key="5">
    <source>
        <dbReference type="SAM" id="MobiDB-lite"/>
    </source>
</evidence>
<evidence type="ECO:0000269" key="6">
    <source>
    </source>
</evidence>
<evidence type="ECO:0000303" key="7">
    <source>
    </source>
</evidence>
<evidence type="ECO:0000303" key="8">
    <source ref="1"/>
</evidence>
<evidence type="ECO:0000305" key="9"/>
<evidence type="ECO:0000312" key="10">
    <source>
        <dbReference type="MGI" id="MGI:2137642"/>
    </source>
</evidence>
<organism>
    <name type="scientific">Mus musculus</name>
    <name type="common">Mouse</name>
    <dbReference type="NCBI Taxonomy" id="10090"/>
    <lineage>
        <taxon>Eukaryota</taxon>
        <taxon>Metazoa</taxon>
        <taxon>Chordata</taxon>
        <taxon>Craniata</taxon>
        <taxon>Vertebrata</taxon>
        <taxon>Euteleostomi</taxon>
        <taxon>Mammalia</taxon>
        <taxon>Eutheria</taxon>
        <taxon>Euarchontoglires</taxon>
        <taxon>Glires</taxon>
        <taxon>Rodentia</taxon>
        <taxon>Myomorpha</taxon>
        <taxon>Muroidea</taxon>
        <taxon>Muridae</taxon>
        <taxon>Murinae</taxon>
        <taxon>Mus</taxon>
        <taxon>Mus</taxon>
    </lineage>
</organism>